<gene>
    <name evidence="1" type="primary">rpl11</name>
    <name type="ordered locus">Kcr_1345</name>
</gene>
<accession>B1L6L2</accession>
<feature type="chain" id="PRO_1000195755" description="Large ribosomal subunit protein uL11">
    <location>
        <begin position="1"/>
        <end position="159"/>
    </location>
</feature>
<feature type="region of interest" description="Disordered" evidence="2">
    <location>
        <begin position="137"/>
        <end position="159"/>
    </location>
</feature>
<feature type="compositionally biased region" description="Basic and acidic residues" evidence="2">
    <location>
        <begin position="137"/>
        <end position="149"/>
    </location>
</feature>
<sequence>MPKKIVRVLIEGGKATPGPPLGPALGGLGLNMGQIVKEINEKTSSYSGMRVPVEIEVDTETKKFEIRVGTPPTSMLILRELKAEKGSSDASKKIGNLKMETVVNIAKMKLASSNTPELKQVVKQVLGTALSMGVTVEGKDPREVQREVDSGAWDKLLGG</sequence>
<organism>
    <name type="scientific">Korarchaeum cryptofilum (strain OPF8)</name>
    <dbReference type="NCBI Taxonomy" id="374847"/>
    <lineage>
        <taxon>Archaea</taxon>
        <taxon>Thermoproteota</taxon>
        <taxon>Candidatus Korarchaeia</taxon>
        <taxon>Candidatus Korarchaeales</taxon>
        <taxon>Candidatus Korarchaeaceae</taxon>
        <taxon>Candidatus Korarchaeum</taxon>
    </lineage>
</organism>
<dbReference type="EMBL" id="CP000968">
    <property type="protein sequence ID" value="ACB08091.1"/>
    <property type="molecule type" value="Genomic_DNA"/>
</dbReference>
<dbReference type="RefSeq" id="WP_012309988.1">
    <property type="nucleotide sequence ID" value="NC_010482.1"/>
</dbReference>
<dbReference type="SMR" id="B1L6L2"/>
<dbReference type="FunCoup" id="B1L6L2">
    <property type="interactions" value="159"/>
</dbReference>
<dbReference type="STRING" id="374847.Kcr_1345"/>
<dbReference type="EnsemblBacteria" id="ACB08091">
    <property type="protein sequence ID" value="ACB08091"/>
    <property type="gene ID" value="Kcr_1345"/>
</dbReference>
<dbReference type="GeneID" id="6094622"/>
<dbReference type="KEGG" id="kcr:Kcr_1345"/>
<dbReference type="eggNOG" id="arCOG04372">
    <property type="taxonomic scope" value="Archaea"/>
</dbReference>
<dbReference type="HOGENOM" id="CLU_074237_4_0_2"/>
<dbReference type="InParanoid" id="B1L6L2"/>
<dbReference type="OrthoDB" id="8842at2157"/>
<dbReference type="PhylomeDB" id="B1L6L2"/>
<dbReference type="Proteomes" id="UP000001686">
    <property type="component" value="Chromosome"/>
</dbReference>
<dbReference type="GO" id="GO:0015934">
    <property type="term" value="C:large ribosomal subunit"/>
    <property type="evidence" value="ECO:0000318"/>
    <property type="project" value="GO_Central"/>
</dbReference>
<dbReference type="GO" id="GO:0070180">
    <property type="term" value="F:large ribosomal subunit rRNA binding"/>
    <property type="evidence" value="ECO:0000318"/>
    <property type="project" value="GO_Central"/>
</dbReference>
<dbReference type="GO" id="GO:0003735">
    <property type="term" value="F:structural constituent of ribosome"/>
    <property type="evidence" value="ECO:0000318"/>
    <property type="project" value="GO_Central"/>
</dbReference>
<dbReference type="GO" id="GO:0006412">
    <property type="term" value="P:translation"/>
    <property type="evidence" value="ECO:0000318"/>
    <property type="project" value="GO_Central"/>
</dbReference>
<dbReference type="CDD" id="cd00349">
    <property type="entry name" value="Ribosomal_L11"/>
    <property type="match status" value="1"/>
</dbReference>
<dbReference type="FunFam" id="3.30.1550.10:FF:000007">
    <property type="entry name" value="50S ribosomal protein L11"/>
    <property type="match status" value="1"/>
</dbReference>
<dbReference type="Gene3D" id="1.10.10.250">
    <property type="entry name" value="Ribosomal protein L11, C-terminal domain"/>
    <property type="match status" value="1"/>
</dbReference>
<dbReference type="Gene3D" id="3.30.1550.10">
    <property type="entry name" value="Ribosomal protein L11/L12, N-terminal domain"/>
    <property type="match status" value="1"/>
</dbReference>
<dbReference type="HAMAP" id="MF_00736">
    <property type="entry name" value="Ribosomal_uL11"/>
    <property type="match status" value="1"/>
</dbReference>
<dbReference type="InterPro" id="IPR000911">
    <property type="entry name" value="Ribosomal_uL11"/>
</dbReference>
<dbReference type="InterPro" id="IPR020783">
    <property type="entry name" value="Ribosomal_uL11_C"/>
</dbReference>
<dbReference type="InterPro" id="IPR036769">
    <property type="entry name" value="Ribosomal_uL11_C_sf"/>
</dbReference>
<dbReference type="InterPro" id="IPR020785">
    <property type="entry name" value="Ribosomal_uL11_CS"/>
</dbReference>
<dbReference type="InterPro" id="IPR020784">
    <property type="entry name" value="Ribosomal_uL11_N"/>
</dbReference>
<dbReference type="InterPro" id="IPR036796">
    <property type="entry name" value="Ribosomal_uL11_N_sf"/>
</dbReference>
<dbReference type="NCBIfam" id="NF002232">
    <property type="entry name" value="PRK01143.1"/>
    <property type="match status" value="1"/>
</dbReference>
<dbReference type="PANTHER" id="PTHR11661">
    <property type="entry name" value="60S RIBOSOMAL PROTEIN L12"/>
    <property type="match status" value="1"/>
</dbReference>
<dbReference type="PANTHER" id="PTHR11661:SF1">
    <property type="entry name" value="LARGE RIBOSOMAL SUBUNIT PROTEIN UL11M"/>
    <property type="match status" value="1"/>
</dbReference>
<dbReference type="Pfam" id="PF00298">
    <property type="entry name" value="Ribosomal_L11"/>
    <property type="match status" value="1"/>
</dbReference>
<dbReference type="Pfam" id="PF03946">
    <property type="entry name" value="Ribosomal_L11_N"/>
    <property type="match status" value="1"/>
</dbReference>
<dbReference type="SMART" id="SM00649">
    <property type="entry name" value="RL11"/>
    <property type="match status" value="1"/>
</dbReference>
<dbReference type="SUPFAM" id="SSF54747">
    <property type="entry name" value="Ribosomal L11/L12e N-terminal domain"/>
    <property type="match status" value="1"/>
</dbReference>
<dbReference type="SUPFAM" id="SSF46906">
    <property type="entry name" value="Ribosomal protein L11, C-terminal domain"/>
    <property type="match status" value="1"/>
</dbReference>
<dbReference type="PROSITE" id="PS00359">
    <property type="entry name" value="RIBOSOMAL_L11"/>
    <property type="match status" value="1"/>
</dbReference>
<evidence type="ECO:0000255" key="1">
    <source>
        <dbReference type="HAMAP-Rule" id="MF_00736"/>
    </source>
</evidence>
<evidence type="ECO:0000256" key="2">
    <source>
        <dbReference type="SAM" id="MobiDB-lite"/>
    </source>
</evidence>
<evidence type="ECO:0000305" key="3"/>
<keyword id="KW-1185">Reference proteome</keyword>
<keyword id="KW-0687">Ribonucleoprotein</keyword>
<keyword id="KW-0689">Ribosomal protein</keyword>
<keyword id="KW-0694">RNA-binding</keyword>
<keyword id="KW-0699">rRNA-binding</keyword>
<name>RL11_KORCO</name>
<proteinExistence type="inferred from homology"/>
<protein>
    <recommendedName>
        <fullName evidence="1">Large ribosomal subunit protein uL11</fullName>
    </recommendedName>
    <alternativeName>
        <fullName evidence="3">50S ribosomal protein L11</fullName>
    </alternativeName>
</protein>
<comment type="function">
    <text evidence="1">Forms part of the ribosomal stalk which helps the ribosome interact with GTP-bound translation factors.</text>
</comment>
<comment type="subunit">
    <text evidence="1">Part of the ribosomal stalk of the 50S ribosomal subunit. Interacts with L10 and the large rRNA to form the base of the stalk. L10 forms an elongated spine to which L12 dimers bind in a sequential fashion forming a multimeric L10(L12)X complex.</text>
</comment>
<comment type="similarity">
    <text evidence="1">Belongs to the universal ribosomal protein uL11 family.</text>
</comment>
<reference key="1">
    <citation type="journal article" date="2008" name="Proc. Natl. Acad. Sci. U.S.A.">
        <title>A korarchaeal genome reveals new insights into the evolution of the Archaea.</title>
        <authorList>
            <person name="Elkins J.G."/>
            <person name="Podar M."/>
            <person name="Graham D.E."/>
            <person name="Makarova K.S."/>
            <person name="Wolf Y."/>
            <person name="Randau L."/>
            <person name="Hedlund B.P."/>
            <person name="Brochier-Armanet C."/>
            <person name="Kunin V."/>
            <person name="Anderson I."/>
            <person name="Lapidus A."/>
            <person name="Goltsman E."/>
            <person name="Barry K."/>
            <person name="Koonin E.V."/>
            <person name="Hugenholtz P."/>
            <person name="Kyrpides N."/>
            <person name="Wanner G."/>
            <person name="Richardson P."/>
            <person name="Keller M."/>
            <person name="Stetter K.O."/>
        </authorList>
    </citation>
    <scope>NUCLEOTIDE SEQUENCE [LARGE SCALE GENOMIC DNA]</scope>
    <source>
        <strain>OPF8</strain>
    </source>
</reference>